<feature type="chain" id="PRO_1000010632" description="Peptidyl-tRNA hydrolase">
    <location>
        <begin position="1"/>
        <end position="194"/>
    </location>
</feature>
<feature type="active site" description="Proton acceptor" evidence="1">
    <location>
        <position position="22"/>
    </location>
</feature>
<feature type="binding site" evidence="1">
    <location>
        <position position="17"/>
    </location>
    <ligand>
        <name>tRNA</name>
        <dbReference type="ChEBI" id="CHEBI:17843"/>
    </ligand>
</feature>
<feature type="binding site" evidence="1">
    <location>
        <position position="68"/>
    </location>
    <ligand>
        <name>tRNA</name>
        <dbReference type="ChEBI" id="CHEBI:17843"/>
    </ligand>
</feature>
<feature type="binding site" evidence="1">
    <location>
        <position position="70"/>
    </location>
    <ligand>
        <name>tRNA</name>
        <dbReference type="ChEBI" id="CHEBI:17843"/>
    </ligand>
</feature>
<feature type="binding site" evidence="1">
    <location>
        <position position="116"/>
    </location>
    <ligand>
        <name>tRNA</name>
        <dbReference type="ChEBI" id="CHEBI:17843"/>
    </ligand>
</feature>
<feature type="site" description="Discriminates between blocked and unblocked aminoacyl-tRNA" evidence="1">
    <location>
        <position position="12"/>
    </location>
</feature>
<feature type="site" description="Stabilizes the basic form of H active site to accept a proton" evidence="1">
    <location>
        <position position="95"/>
    </location>
</feature>
<evidence type="ECO:0000255" key="1">
    <source>
        <dbReference type="HAMAP-Rule" id="MF_00083"/>
    </source>
</evidence>
<protein>
    <recommendedName>
        <fullName evidence="1">Peptidyl-tRNA hydrolase</fullName>
        <shortName evidence="1">Pth</shortName>
        <ecNumber evidence="1">3.1.1.29</ecNumber>
    </recommendedName>
</protein>
<proteinExistence type="inferred from homology"/>
<gene>
    <name evidence="1" type="primary">pth</name>
    <name type="ordered locus">PSEEN0855</name>
</gene>
<comment type="function">
    <text evidence="1">Hydrolyzes ribosome-free peptidyl-tRNAs (with 1 or more amino acids incorporated), which drop off the ribosome during protein synthesis, or as a result of ribosome stalling.</text>
</comment>
<comment type="function">
    <text evidence="1">Catalyzes the release of premature peptidyl moieties from peptidyl-tRNA molecules trapped in stalled 50S ribosomal subunits, and thus maintains levels of free tRNAs and 50S ribosomes.</text>
</comment>
<comment type="catalytic activity">
    <reaction evidence="1">
        <text>an N-acyl-L-alpha-aminoacyl-tRNA + H2O = an N-acyl-L-amino acid + a tRNA + H(+)</text>
        <dbReference type="Rhea" id="RHEA:54448"/>
        <dbReference type="Rhea" id="RHEA-COMP:10123"/>
        <dbReference type="Rhea" id="RHEA-COMP:13883"/>
        <dbReference type="ChEBI" id="CHEBI:15377"/>
        <dbReference type="ChEBI" id="CHEBI:15378"/>
        <dbReference type="ChEBI" id="CHEBI:59874"/>
        <dbReference type="ChEBI" id="CHEBI:78442"/>
        <dbReference type="ChEBI" id="CHEBI:138191"/>
        <dbReference type="EC" id="3.1.1.29"/>
    </reaction>
</comment>
<comment type="subunit">
    <text evidence="1">Monomer.</text>
</comment>
<comment type="subcellular location">
    <subcellularLocation>
        <location evidence="1">Cytoplasm</location>
    </subcellularLocation>
</comment>
<comment type="similarity">
    <text evidence="1">Belongs to the PTH family.</text>
</comment>
<sequence>MTAIQLIVGLGNPGPEYEQTRHNAGALFVERLASAQRVSLTADKKYFGLTAKFSHQGNDVRLLIPTTYMNRSGQSVAALANFFRIKPEAILVAHDELDLPPGVAKLKRGGGHGGHNGLRDIIAQLGNQNDFHRLRLGIGHPGDAKLVSNFVLGRAPRAEQEKLDASIDFALGVMPDVLAGDFAKAMRELHCQKA</sequence>
<reference key="1">
    <citation type="journal article" date="2006" name="Nat. Biotechnol.">
        <title>Complete genome sequence of the entomopathogenic and metabolically versatile soil bacterium Pseudomonas entomophila.</title>
        <authorList>
            <person name="Vodovar N."/>
            <person name="Vallenet D."/>
            <person name="Cruveiller S."/>
            <person name="Rouy Z."/>
            <person name="Barbe V."/>
            <person name="Acosta C."/>
            <person name="Cattolico L."/>
            <person name="Jubin C."/>
            <person name="Lajus A."/>
            <person name="Segurens B."/>
            <person name="Vacherie B."/>
            <person name="Wincker P."/>
            <person name="Weissenbach J."/>
            <person name="Lemaitre B."/>
            <person name="Medigue C."/>
            <person name="Boccard F."/>
        </authorList>
    </citation>
    <scope>NUCLEOTIDE SEQUENCE [LARGE SCALE GENOMIC DNA]</scope>
    <source>
        <strain>L48</strain>
    </source>
</reference>
<keyword id="KW-0963">Cytoplasm</keyword>
<keyword id="KW-0378">Hydrolase</keyword>
<keyword id="KW-0694">RNA-binding</keyword>
<keyword id="KW-0820">tRNA-binding</keyword>
<organism>
    <name type="scientific">Pseudomonas entomophila (strain L48)</name>
    <dbReference type="NCBI Taxonomy" id="384676"/>
    <lineage>
        <taxon>Bacteria</taxon>
        <taxon>Pseudomonadati</taxon>
        <taxon>Pseudomonadota</taxon>
        <taxon>Gammaproteobacteria</taxon>
        <taxon>Pseudomonadales</taxon>
        <taxon>Pseudomonadaceae</taxon>
        <taxon>Pseudomonas</taxon>
    </lineage>
</organism>
<accession>Q1IEY8</accession>
<dbReference type="EC" id="3.1.1.29" evidence="1"/>
<dbReference type="EMBL" id="CT573326">
    <property type="protein sequence ID" value="CAK13766.1"/>
    <property type="molecule type" value="Genomic_DNA"/>
</dbReference>
<dbReference type="RefSeq" id="WP_011532195.1">
    <property type="nucleotide sequence ID" value="NC_008027.1"/>
</dbReference>
<dbReference type="SMR" id="Q1IEY8"/>
<dbReference type="STRING" id="384676.PSEEN0855"/>
<dbReference type="GeneID" id="32804160"/>
<dbReference type="KEGG" id="pen:PSEEN0855"/>
<dbReference type="eggNOG" id="COG0193">
    <property type="taxonomic scope" value="Bacteria"/>
</dbReference>
<dbReference type="HOGENOM" id="CLU_062456_3_1_6"/>
<dbReference type="OrthoDB" id="9800507at2"/>
<dbReference type="Proteomes" id="UP000000658">
    <property type="component" value="Chromosome"/>
</dbReference>
<dbReference type="GO" id="GO:0005737">
    <property type="term" value="C:cytoplasm"/>
    <property type="evidence" value="ECO:0007669"/>
    <property type="project" value="UniProtKB-SubCell"/>
</dbReference>
<dbReference type="GO" id="GO:0004045">
    <property type="term" value="F:peptidyl-tRNA hydrolase activity"/>
    <property type="evidence" value="ECO:0007669"/>
    <property type="project" value="UniProtKB-UniRule"/>
</dbReference>
<dbReference type="GO" id="GO:0000049">
    <property type="term" value="F:tRNA binding"/>
    <property type="evidence" value="ECO:0007669"/>
    <property type="project" value="UniProtKB-UniRule"/>
</dbReference>
<dbReference type="GO" id="GO:0006515">
    <property type="term" value="P:protein quality control for misfolded or incompletely synthesized proteins"/>
    <property type="evidence" value="ECO:0007669"/>
    <property type="project" value="UniProtKB-UniRule"/>
</dbReference>
<dbReference type="GO" id="GO:0072344">
    <property type="term" value="P:rescue of stalled ribosome"/>
    <property type="evidence" value="ECO:0007669"/>
    <property type="project" value="UniProtKB-UniRule"/>
</dbReference>
<dbReference type="CDD" id="cd00462">
    <property type="entry name" value="PTH"/>
    <property type="match status" value="1"/>
</dbReference>
<dbReference type="FunFam" id="3.40.50.1470:FF:000001">
    <property type="entry name" value="Peptidyl-tRNA hydrolase"/>
    <property type="match status" value="1"/>
</dbReference>
<dbReference type="Gene3D" id="3.40.50.1470">
    <property type="entry name" value="Peptidyl-tRNA hydrolase"/>
    <property type="match status" value="1"/>
</dbReference>
<dbReference type="HAMAP" id="MF_00083">
    <property type="entry name" value="Pept_tRNA_hydro_bact"/>
    <property type="match status" value="1"/>
</dbReference>
<dbReference type="InterPro" id="IPR001328">
    <property type="entry name" value="Pept_tRNA_hydro"/>
</dbReference>
<dbReference type="InterPro" id="IPR018171">
    <property type="entry name" value="Pept_tRNA_hydro_CS"/>
</dbReference>
<dbReference type="InterPro" id="IPR036416">
    <property type="entry name" value="Pept_tRNA_hydro_sf"/>
</dbReference>
<dbReference type="NCBIfam" id="TIGR00447">
    <property type="entry name" value="pth"/>
    <property type="match status" value="1"/>
</dbReference>
<dbReference type="PANTHER" id="PTHR17224">
    <property type="entry name" value="PEPTIDYL-TRNA HYDROLASE"/>
    <property type="match status" value="1"/>
</dbReference>
<dbReference type="PANTHER" id="PTHR17224:SF1">
    <property type="entry name" value="PEPTIDYL-TRNA HYDROLASE"/>
    <property type="match status" value="1"/>
</dbReference>
<dbReference type="Pfam" id="PF01195">
    <property type="entry name" value="Pept_tRNA_hydro"/>
    <property type="match status" value="1"/>
</dbReference>
<dbReference type="SUPFAM" id="SSF53178">
    <property type="entry name" value="Peptidyl-tRNA hydrolase-like"/>
    <property type="match status" value="1"/>
</dbReference>
<dbReference type="PROSITE" id="PS01195">
    <property type="entry name" value="PEPT_TRNA_HYDROL_1"/>
    <property type="match status" value="1"/>
</dbReference>
<dbReference type="PROSITE" id="PS01196">
    <property type="entry name" value="PEPT_TRNA_HYDROL_2"/>
    <property type="match status" value="1"/>
</dbReference>
<name>PTH_PSEE4</name>